<keyword id="KW-1185">Reference proteome</keyword>
<keyword id="KW-0687">Ribonucleoprotein</keyword>
<keyword id="KW-0689">Ribosomal protein</keyword>
<gene>
    <name evidence="1" type="primary">rplL</name>
    <name type="ordered locus">MXAN_3076</name>
</gene>
<name>RL7_MYXXD</name>
<accession>Q1D7U4</accession>
<protein>
    <recommendedName>
        <fullName evidence="1">Large ribosomal subunit protein bL12</fullName>
    </recommendedName>
    <alternativeName>
        <fullName evidence="2">50S ribosomal protein L7/L12</fullName>
    </alternativeName>
</protein>
<dbReference type="EMBL" id="CP000113">
    <property type="protein sequence ID" value="ABF91863.1"/>
    <property type="molecule type" value="Genomic_DNA"/>
</dbReference>
<dbReference type="RefSeq" id="WP_011553126.1">
    <property type="nucleotide sequence ID" value="NC_008095.1"/>
</dbReference>
<dbReference type="SMR" id="Q1D7U4"/>
<dbReference type="STRING" id="246197.MXAN_3076"/>
<dbReference type="EnsemblBacteria" id="ABF91863">
    <property type="protein sequence ID" value="ABF91863"/>
    <property type="gene ID" value="MXAN_3076"/>
</dbReference>
<dbReference type="GeneID" id="41360438"/>
<dbReference type="KEGG" id="mxa:MXAN_3076"/>
<dbReference type="eggNOG" id="COG0222">
    <property type="taxonomic scope" value="Bacteria"/>
</dbReference>
<dbReference type="HOGENOM" id="CLU_086499_3_0_7"/>
<dbReference type="OrthoDB" id="9811748at2"/>
<dbReference type="Proteomes" id="UP000002402">
    <property type="component" value="Chromosome"/>
</dbReference>
<dbReference type="GO" id="GO:0022625">
    <property type="term" value="C:cytosolic large ribosomal subunit"/>
    <property type="evidence" value="ECO:0007669"/>
    <property type="project" value="TreeGrafter"/>
</dbReference>
<dbReference type="GO" id="GO:0003729">
    <property type="term" value="F:mRNA binding"/>
    <property type="evidence" value="ECO:0007669"/>
    <property type="project" value="TreeGrafter"/>
</dbReference>
<dbReference type="GO" id="GO:0003735">
    <property type="term" value="F:structural constituent of ribosome"/>
    <property type="evidence" value="ECO:0007669"/>
    <property type="project" value="InterPro"/>
</dbReference>
<dbReference type="GO" id="GO:0006412">
    <property type="term" value="P:translation"/>
    <property type="evidence" value="ECO:0007669"/>
    <property type="project" value="UniProtKB-UniRule"/>
</dbReference>
<dbReference type="CDD" id="cd00387">
    <property type="entry name" value="Ribosomal_L7_L12"/>
    <property type="match status" value="1"/>
</dbReference>
<dbReference type="FunFam" id="3.30.1390.10:FF:000001">
    <property type="entry name" value="50S ribosomal protein L7/L12"/>
    <property type="match status" value="1"/>
</dbReference>
<dbReference type="Gene3D" id="3.30.1390.10">
    <property type="match status" value="1"/>
</dbReference>
<dbReference type="Gene3D" id="1.20.5.710">
    <property type="entry name" value="Single helix bin"/>
    <property type="match status" value="1"/>
</dbReference>
<dbReference type="HAMAP" id="MF_00368">
    <property type="entry name" value="Ribosomal_bL12"/>
    <property type="match status" value="1"/>
</dbReference>
<dbReference type="InterPro" id="IPR000206">
    <property type="entry name" value="Ribosomal_bL12"/>
</dbReference>
<dbReference type="InterPro" id="IPR013823">
    <property type="entry name" value="Ribosomal_bL12_C"/>
</dbReference>
<dbReference type="InterPro" id="IPR014719">
    <property type="entry name" value="Ribosomal_bL12_C/ClpS-like"/>
</dbReference>
<dbReference type="InterPro" id="IPR008932">
    <property type="entry name" value="Ribosomal_bL12_oligo"/>
</dbReference>
<dbReference type="InterPro" id="IPR036235">
    <property type="entry name" value="Ribosomal_bL12_oligo_N_sf"/>
</dbReference>
<dbReference type="NCBIfam" id="TIGR00855">
    <property type="entry name" value="L12"/>
    <property type="match status" value="1"/>
</dbReference>
<dbReference type="PANTHER" id="PTHR45987">
    <property type="entry name" value="39S RIBOSOMAL PROTEIN L12"/>
    <property type="match status" value="1"/>
</dbReference>
<dbReference type="PANTHER" id="PTHR45987:SF4">
    <property type="entry name" value="LARGE RIBOSOMAL SUBUNIT PROTEIN BL12M"/>
    <property type="match status" value="1"/>
</dbReference>
<dbReference type="Pfam" id="PF00542">
    <property type="entry name" value="Ribosomal_L12"/>
    <property type="match status" value="1"/>
</dbReference>
<dbReference type="Pfam" id="PF16320">
    <property type="entry name" value="Ribosomal_L12_N"/>
    <property type="match status" value="1"/>
</dbReference>
<dbReference type="SUPFAM" id="SSF54736">
    <property type="entry name" value="ClpS-like"/>
    <property type="match status" value="1"/>
</dbReference>
<dbReference type="SUPFAM" id="SSF48300">
    <property type="entry name" value="Ribosomal protein L7/12, oligomerisation (N-terminal) domain"/>
    <property type="match status" value="1"/>
</dbReference>
<evidence type="ECO:0000255" key="1">
    <source>
        <dbReference type="HAMAP-Rule" id="MF_00368"/>
    </source>
</evidence>
<evidence type="ECO:0000305" key="2"/>
<feature type="chain" id="PRO_1000007043" description="Large ribosomal subunit protein bL12">
    <location>
        <begin position="1"/>
        <end position="122"/>
    </location>
</feature>
<organism>
    <name type="scientific">Myxococcus xanthus (strain DK1622)</name>
    <dbReference type="NCBI Taxonomy" id="246197"/>
    <lineage>
        <taxon>Bacteria</taxon>
        <taxon>Pseudomonadati</taxon>
        <taxon>Myxococcota</taxon>
        <taxon>Myxococcia</taxon>
        <taxon>Myxococcales</taxon>
        <taxon>Cystobacterineae</taxon>
        <taxon>Myxococcaceae</taxon>
        <taxon>Myxococcus</taxon>
    </lineage>
</organism>
<sequence>MADLNAIVDQLSSLTVLEAAELVKQLESKWGVSAAAVAVAAGPAAAAAPVEEKTEFTVVLANAGANKINVIKEIRAITGLGLKEAKDLVEGAPKNVKEGVNKDDAKKIKDQLTAAGATVDIK</sequence>
<reference key="1">
    <citation type="journal article" date="2006" name="Proc. Natl. Acad. Sci. U.S.A.">
        <title>Evolution of sensory complexity recorded in a myxobacterial genome.</title>
        <authorList>
            <person name="Goldman B.S."/>
            <person name="Nierman W.C."/>
            <person name="Kaiser D."/>
            <person name="Slater S.C."/>
            <person name="Durkin A.S."/>
            <person name="Eisen J.A."/>
            <person name="Ronning C.M."/>
            <person name="Barbazuk W.B."/>
            <person name="Blanchard M."/>
            <person name="Field C."/>
            <person name="Halling C."/>
            <person name="Hinkle G."/>
            <person name="Iartchuk O."/>
            <person name="Kim H.S."/>
            <person name="Mackenzie C."/>
            <person name="Madupu R."/>
            <person name="Miller N."/>
            <person name="Shvartsbeyn A."/>
            <person name="Sullivan S.A."/>
            <person name="Vaudin M."/>
            <person name="Wiegand R."/>
            <person name="Kaplan H.B."/>
        </authorList>
    </citation>
    <scope>NUCLEOTIDE SEQUENCE [LARGE SCALE GENOMIC DNA]</scope>
    <source>
        <strain>DK1622</strain>
    </source>
</reference>
<proteinExistence type="inferred from homology"/>
<comment type="function">
    <text evidence="1">Forms part of the ribosomal stalk which helps the ribosome interact with GTP-bound translation factors. Is thus essential for accurate translation.</text>
</comment>
<comment type="subunit">
    <text evidence="1">Homodimer. Part of the ribosomal stalk of the 50S ribosomal subunit. Forms a multimeric L10(L12)X complex, where L10 forms an elongated spine to which 2 to 4 L12 dimers bind in a sequential fashion. Binds GTP-bound translation factors.</text>
</comment>
<comment type="similarity">
    <text evidence="1">Belongs to the bacterial ribosomal protein bL12 family.</text>
</comment>